<evidence type="ECO:0000255" key="1">
    <source>
        <dbReference type="HAMAP-Rule" id="MF_01208"/>
    </source>
</evidence>
<organism>
    <name type="scientific">Yersinia enterocolitica serotype O:8 / biotype 1B (strain NCTC 13174 / 8081)</name>
    <dbReference type="NCBI Taxonomy" id="393305"/>
    <lineage>
        <taxon>Bacteria</taxon>
        <taxon>Pseudomonadati</taxon>
        <taxon>Pseudomonadota</taxon>
        <taxon>Gammaproteobacteria</taxon>
        <taxon>Enterobacterales</taxon>
        <taxon>Yersiniaceae</taxon>
        <taxon>Yersinia</taxon>
    </lineage>
</organism>
<name>PYRE_YERE8</name>
<proteinExistence type="inferred from homology"/>
<reference key="1">
    <citation type="journal article" date="2006" name="PLoS Genet.">
        <title>The complete genome sequence and comparative genome analysis of the high pathogenicity Yersinia enterocolitica strain 8081.</title>
        <authorList>
            <person name="Thomson N.R."/>
            <person name="Howard S."/>
            <person name="Wren B.W."/>
            <person name="Holden M.T.G."/>
            <person name="Crossman L."/>
            <person name="Challis G.L."/>
            <person name="Churcher C."/>
            <person name="Mungall K."/>
            <person name="Brooks K."/>
            <person name="Chillingworth T."/>
            <person name="Feltwell T."/>
            <person name="Abdellah Z."/>
            <person name="Hauser H."/>
            <person name="Jagels K."/>
            <person name="Maddison M."/>
            <person name="Moule S."/>
            <person name="Sanders M."/>
            <person name="Whitehead S."/>
            <person name="Quail M.A."/>
            <person name="Dougan G."/>
            <person name="Parkhill J."/>
            <person name="Prentice M.B."/>
        </authorList>
    </citation>
    <scope>NUCLEOTIDE SEQUENCE [LARGE SCALE GENOMIC DNA]</scope>
    <source>
        <strain>NCTC 13174 / 8081</strain>
    </source>
</reference>
<feature type="chain" id="PRO_1000066327" description="Orotate phosphoribosyltransferase">
    <location>
        <begin position="1"/>
        <end position="213"/>
    </location>
</feature>
<feature type="binding site" description="in other chain" evidence="1">
    <location>
        <position position="26"/>
    </location>
    <ligand>
        <name>5-phospho-alpha-D-ribose 1-diphosphate</name>
        <dbReference type="ChEBI" id="CHEBI:58017"/>
        <note>ligand shared between dimeric partners</note>
    </ligand>
</feature>
<feature type="binding site" evidence="1">
    <location>
        <begin position="34"/>
        <end position="35"/>
    </location>
    <ligand>
        <name>orotate</name>
        <dbReference type="ChEBI" id="CHEBI:30839"/>
    </ligand>
</feature>
<feature type="binding site" description="in other chain" evidence="1">
    <location>
        <begin position="72"/>
        <end position="73"/>
    </location>
    <ligand>
        <name>5-phospho-alpha-D-ribose 1-diphosphate</name>
        <dbReference type="ChEBI" id="CHEBI:58017"/>
        <note>ligand shared between dimeric partners</note>
    </ligand>
</feature>
<feature type="binding site" evidence="1">
    <location>
        <position position="99"/>
    </location>
    <ligand>
        <name>5-phospho-alpha-D-ribose 1-diphosphate</name>
        <dbReference type="ChEBI" id="CHEBI:58017"/>
        <note>ligand shared between dimeric partners</note>
    </ligand>
</feature>
<feature type="binding site" description="in other chain" evidence="1">
    <location>
        <position position="100"/>
    </location>
    <ligand>
        <name>5-phospho-alpha-D-ribose 1-diphosphate</name>
        <dbReference type="ChEBI" id="CHEBI:58017"/>
        <note>ligand shared between dimeric partners</note>
    </ligand>
</feature>
<feature type="binding site" evidence="1">
    <location>
        <position position="103"/>
    </location>
    <ligand>
        <name>5-phospho-alpha-D-ribose 1-diphosphate</name>
        <dbReference type="ChEBI" id="CHEBI:58017"/>
        <note>ligand shared between dimeric partners</note>
    </ligand>
</feature>
<feature type="binding site" evidence="1">
    <location>
        <position position="105"/>
    </location>
    <ligand>
        <name>5-phospho-alpha-D-ribose 1-diphosphate</name>
        <dbReference type="ChEBI" id="CHEBI:58017"/>
        <note>ligand shared between dimeric partners</note>
    </ligand>
</feature>
<feature type="binding site" description="in other chain" evidence="1">
    <location>
        <begin position="124"/>
        <end position="132"/>
    </location>
    <ligand>
        <name>5-phospho-alpha-D-ribose 1-diphosphate</name>
        <dbReference type="ChEBI" id="CHEBI:58017"/>
        <note>ligand shared between dimeric partners</note>
    </ligand>
</feature>
<feature type="binding site" evidence="1">
    <location>
        <position position="128"/>
    </location>
    <ligand>
        <name>orotate</name>
        <dbReference type="ChEBI" id="CHEBI:30839"/>
    </ligand>
</feature>
<feature type="binding site" evidence="1">
    <location>
        <position position="156"/>
    </location>
    <ligand>
        <name>orotate</name>
        <dbReference type="ChEBI" id="CHEBI:30839"/>
    </ligand>
</feature>
<sequence>MKAYQREFIEFALNKQVLKFGEFTLKSGRISPYFFNAGLFNTGLELAKLGRFYAAALMDCGVEFDLLFGPAYKGIPIATTTAVALAEHHNRDLPYCFNRKEAKDHGEGGSLVGSPLEGRVMLVDDVITAGTAIRESMEIINAQGATLAGVMISLDRQERGRGEISAIQEVERDYHCKVIAIVTLNDVISYLEEKPEMADHLAAVRHYREQYGV</sequence>
<accession>A1JHW8</accession>
<gene>
    <name evidence="1" type="primary">pyrE</name>
    <name type="ordered locus">YE0059</name>
</gene>
<comment type="function">
    <text evidence="1">Catalyzes the transfer of a ribosyl phosphate group from 5-phosphoribose 1-diphosphate to orotate, leading to the formation of orotidine monophosphate (OMP).</text>
</comment>
<comment type="catalytic activity">
    <reaction evidence="1">
        <text>orotidine 5'-phosphate + diphosphate = orotate + 5-phospho-alpha-D-ribose 1-diphosphate</text>
        <dbReference type="Rhea" id="RHEA:10380"/>
        <dbReference type="ChEBI" id="CHEBI:30839"/>
        <dbReference type="ChEBI" id="CHEBI:33019"/>
        <dbReference type="ChEBI" id="CHEBI:57538"/>
        <dbReference type="ChEBI" id="CHEBI:58017"/>
        <dbReference type="EC" id="2.4.2.10"/>
    </reaction>
</comment>
<comment type="cofactor">
    <cofactor evidence="1">
        <name>Mg(2+)</name>
        <dbReference type="ChEBI" id="CHEBI:18420"/>
    </cofactor>
</comment>
<comment type="pathway">
    <text evidence="1">Pyrimidine metabolism; UMP biosynthesis via de novo pathway; UMP from orotate: step 1/2.</text>
</comment>
<comment type="subunit">
    <text evidence="1">Homodimer.</text>
</comment>
<comment type="similarity">
    <text evidence="1">Belongs to the purine/pyrimidine phosphoribosyltransferase family. PyrE subfamily.</text>
</comment>
<protein>
    <recommendedName>
        <fullName evidence="1">Orotate phosphoribosyltransferase</fullName>
        <shortName evidence="1">OPRT</shortName>
        <shortName evidence="1">OPRTase</shortName>
        <ecNumber evidence="1">2.4.2.10</ecNumber>
    </recommendedName>
</protein>
<keyword id="KW-0328">Glycosyltransferase</keyword>
<keyword id="KW-0460">Magnesium</keyword>
<keyword id="KW-0665">Pyrimidine biosynthesis</keyword>
<keyword id="KW-0808">Transferase</keyword>
<dbReference type="EC" id="2.4.2.10" evidence="1"/>
<dbReference type="EMBL" id="AM286415">
    <property type="protein sequence ID" value="CAL10201.1"/>
    <property type="molecule type" value="Genomic_DNA"/>
</dbReference>
<dbReference type="RefSeq" id="WP_011815272.1">
    <property type="nucleotide sequence ID" value="NC_008800.1"/>
</dbReference>
<dbReference type="RefSeq" id="YP_001004453.1">
    <property type="nucleotide sequence ID" value="NC_008800.1"/>
</dbReference>
<dbReference type="SMR" id="A1JHW8"/>
<dbReference type="KEGG" id="yen:YE0059"/>
<dbReference type="PATRIC" id="fig|393305.7.peg.147"/>
<dbReference type="eggNOG" id="COG0461">
    <property type="taxonomic scope" value="Bacteria"/>
</dbReference>
<dbReference type="HOGENOM" id="CLU_074878_0_1_6"/>
<dbReference type="OrthoDB" id="9779060at2"/>
<dbReference type="UniPathway" id="UPA00070">
    <property type="reaction ID" value="UER00119"/>
</dbReference>
<dbReference type="Proteomes" id="UP000000642">
    <property type="component" value="Chromosome"/>
</dbReference>
<dbReference type="GO" id="GO:0005737">
    <property type="term" value="C:cytoplasm"/>
    <property type="evidence" value="ECO:0007669"/>
    <property type="project" value="TreeGrafter"/>
</dbReference>
<dbReference type="GO" id="GO:0000287">
    <property type="term" value="F:magnesium ion binding"/>
    <property type="evidence" value="ECO:0007669"/>
    <property type="project" value="UniProtKB-UniRule"/>
</dbReference>
<dbReference type="GO" id="GO:0004588">
    <property type="term" value="F:orotate phosphoribosyltransferase activity"/>
    <property type="evidence" value="ECO:0007669"/>
    <property type="project" value="UniProtKB-UniRule"/>
</dbReference>
<dbReference type="GO" id="GO:0006207">
    <property type="term" value="P:'de novo' pyrimidine nucleobase biosynthetic process"/>
    <property type="evidence" value="ECO:0007669"/>
    <property type="project" value="TreeGrafter"/>
</dbReference>
<dbReference type="GO" id="GO:0044205">
    <property type="term" value="P:'de novo' UMP biosynthetic process"/>
    <property type="evidence" value="ECO:0007669"/>
    <property type="project" value="UniProtKB-UniRule"/>
</dbReference>
<dbReference type="GO" id="GO:0046132">
    <property type="term" value="P:pyrimidine ribonucleoside biosynthetic process"/>
    <property type="evidence" value="ECO:0007669"/>
    <property type="project" value="TreeGrafter"/>
</dbReference>
<dbReference type="CDD" id="cd06223">
    <property type="entry name" value="PRTases_typeI"/>
    <property type="match status" value="1"/>
</dbReference>
<dbReference type="FunFam" id="3.40.50.2020:FF:000008">
    <property type="entry name" value="Orotate phosphoribosyltransferase"/>
    <property type="match status" value="1"/>
</dbReference>
<dbReference type="Gene3D" id="3.40.50.2020">
    <property type="match status" value="1"/>
</dbReference>
<dbReference type="HAMAP" id="MF_01208">
    <property type="entry name" value="PyrE"/>
    <property type="match status" value="1"/>
</dbReference>
<dbReference type="InterPro" id="IPR023031">
    <property type="entry name" value="OPRT"/>
</dbReference>
<dbReference type="InterPro" id="IPR004467">
    <property type="entry name" value="Or_phspho_trans_dom"/>
</dbReference>
<dbReference type="InterPro" id="IPR000836">
    <property type="entry name" value="PRibTrfase_dom"/>
</dbReference>
<dbReference type="InterPro" id="IPR029057">
    <property type="entry name" value="PRTase-like"/>
</dbReference>
<dbReference type="NCBIfam" id="TIGR00336">
    <property type="entry name" value="pyrE"/>
    <property type="match status" value="1"/>
</dbReference>
<dbReference type="PANTHER" id="PTHR46683">
    <property type="entry name" value="OROTATE PHOSPHORIBOSYLTRANSFERASE 1-RELATED"/>
    <property type="match status" value="1"/>
</dbReference>
<dbReference type="PANTHER" id="PTHR46683:SF1">
    <property type="entry name" value="OROTATE PHOSPHORIBOSYLTRANSFERASE 1-RELATED"/>
    <property type="match status" value="1"/>
</dbReference>
<dbReference type="Pfam" id="PF00156">
    <property type="entry name" value="Pribosyltran"/>
    <property type="match status" value="1"/>
</dbReference>
<dbReference type="SUPFAM" id="SSF53271">
    <property type="entry name" value="PRTase-like"/>
    <property type="match status" value="1"/>
</dbReference>
<dbReference type="PROSITE" id="PS00103">
    <property type="entry name" value="PUR_PYR_PR_TRANSFER"/>
    <property type="match status" value="1"/>
</dbReference>